<evidence type="ECO:0000250" key="1">
    <source>
        <dbReference type="UniProtKB" id="P08525"/>
    </source>
</evidence>
<evidence type="ECO:0000255" key="2"/>
<evidence type="ECO:0000305" key="3"/>
<dbReference type="EMBL" id="AAFI02000037">
    <property type="protein sequence ID" value="EAL67086.1"/>
    <property type="molecule type" value="Genomic_DNA"/>
</dbReference>
<dbReference type="SMR" id="Q54V76"/>
<dbReference type="FunCoup" id="Q54V76">
    <property type="interactions" value="43"/>
</dbReference>
<dbReference type="STRING" id="44689.Q54V76"/>
<dbReference type="PaxDb" id="44689-DDB0267111"/>
<dbReference type="EnsemblProtists" id="EAL67086">
    <property type="protein sequence ID" value="EAL67086"/>
    <property type="gene ID" value="DDB_G0280569"/>
</dbReference>
<dbReference type="KEGG" id="ddi:DDB_G0280569"/>
<dbReference type="dictyBase" id="DDB_G0280569">
    <property type="gene designation" value="uqcrq"/>
</dbReference>
<dbReference type="VEuPathDB" id="AmoebaDB:DDB_G0280569"/>
<dbReference type="eggNOG" id="ENOG502RI1H">
    <property type="taxonomic scope" value="Eukaryota"/>
</dbReference>
<dbReference type="HOGENOM" id="CLU_2710016_0_0_1"/>
<dbReference type="InParanoid" id="Q54V76"/>
<dbReference type="OMA" id="WANETYH"/>
<dbReference type="PhylomeDB" id="Q54V76"/>
<dbReference type="Reactome" id="R-DDI-611105">
    <property type="pathway name" value="Respiratory electron transport"/>
</dbReference>
<dbReference type="Reactome" id="R-DDI-9837999">
    <property type="pathway name" value="Mitochondrial protein degradation"/>
</dbReference>
<dbReference type="PRO" id="PR:Q54V76"/>
<dbReference type="Proteomes" id="UP000002195">
    <property type="component" value="Chromosome 3"/>
</dbReference>
<dbReference type="GO" id="GO:0005743">
    <property type="term" value="C:mitochondrial inner membrane"/>
    <property type="evidence" value="ECO:0007669"/>
    <property type="project" value="UniProtKB-SubCell"/>
</dbReference>
<dbReference type="GO" id="GO:0045275">
    <property type="term" value="C:respiratory chain complex III"/>
    <property type="evidence" value="ECO:0000318"/>
    <property type="project" value="GO_Central"/>
</dbReference>
<dbReference type="GO" id="GO:0006122">
    <property type="term" value="P:mitochondrial electron transport, ubiquinol to cytochrome c"/>
    <property type="evidence" value="ECO:0000318"/>
    <property type="project" value="GO_Central"/>
</dbReference>
<dbReference type="FunFam" id="1.20.5.210:FF:000004">
    <property type="match status" value="1"/>
</dbReference>
<dbReference type="Gene3D" id="1.20.5.210">
    <property type="entry name" value="Cytochrome b-c1 complex subunit 8"/>
    <property type="match status" value="1"/>
</dbReference>
<dbReference type="InterPro" id="IPR004205">
    <property type="entry name" value="Cyt_bc1_su8"/>
</dbReference>
<dbReference type="InterPro" id="IPR036642">
    <property type="entry name" value="Cyt_bc1_su8_sf"/>
</dbReference>
<dbReference type="PANTHER" id="PTHR12119:SF2">
    <property type="entry name" value="CYTOCHROME B-C1 COMPLEX SUBUNIT 8"/>
    <property type="match status" value="1"/>
</dbReference>
<dbReference type="PANTHER" id="PTHR12119">
    <property type="entry name" value="UBIQUINOL-CYTOCHROME C REDUCTASE COMPLEX UBIQUINONE-BINDING PROTEIN QP-C"/>
    <property type="match status" value="1"/>
</dbReference>
<dbReference type="Pfam" id="PF02939">
    <property type="entry name" value="UcrQ"/>
    <property type="match status" value="1"/>
</dbReference>
<dbReference type="SUPFAM" id="SSF81508">
    <property type="entry name" value="Ubiquinone-binding protein QP-C of cytochrome bc1 complex (Ubiquinol-cytochrome c reductase)"/>
    <property type="match status" value="1"/>
</dbReference>
<reference key="1">
    <citation type="journal article" date="2005" name="Nature">
        <title>The genome of the social amoeba Dictyostelium discoideum.</title>
        <authorList>
            <person name="Eichinger L."/>
            <person name="Pachebat J.A."/>
            <person name="Gloeckner G."/>
            <person name="Rajandream M.A."/>
            <person name="Sucgang R."/>
            <person name="Berriman M."/>
            <person name="Song J."/>
            <person name="Olsen R."/>
            <person name="Szafranski K."/>
            <person name="Xu Q."/>
            <person name="Tunggal B."/>
            <person name="Kummerfeld S."/>
            <person name="Madera M."/>
            <person name="Konfortov B.A."/>
            <person name="Rivero F."/>
            <person name="Bankier A.T."/>
            <person name="Lehmann R."/>
            <person name="Hamlin N."/>
            <person name="Davies R."/>
            <person name="Gaudet P."/>
            <person name="Fey P."/>
            <person name="Pilcher K."/>
            <person name="Chen G."/>
            <person name="Saunders D."/>
            <person name="Sodergren E.J."/>
            <person name="Davis P."/>
            <person name="Kerhornou A."/>
            <person name="Nie X."/>
            <person name="Hall N."/>
            <person name="Anjard C."/>
            <person name="Hemphill L."/>
            <person name="Bason N."/>
            <person name="Farbrother P."/>
            <person name="Desany B."/>
            <person name="Just E."/>
            <person name="Morio T."/>
            <person name="Rost R."/>
            <person name="Churcher C.M."/>
            <person name="Cooper J."/>
            <person name="Haydock S."/>
            <person name="van Driessche N."/>
            <person name="Cronin A."/>
            <person name="Goodhead I."/>
            <person name="Muzny D.M."/>
            <person name="Mourier T."/>
            <person name="Pain A."/>
            <person name="Lu M."/>
            <person name="Harper D."/>
            <person name="Lindsay R."/>
            <person name="Hauser H."/>
            <person name="James K.D."/>
            <person name="Quiles M."/>
            <person name="Madan Babu M."/>
            <person name="Saito T."/>
            <person name="Buchrieser C."/>
            <person name="Wardroper A."/>
            <person name="Felder M."/>
            <person name="Thangavelu M."/>
            <person name="Johnson D."/>
            <person name="Knights A."/>
            <person name="Loulseged H."/>
            <person name="Mungall K.L."/>
            <person name="Oliver K."/>
            <person name="Price C."/>
            <person name="Quail M.A."/>
            <person name="Urushihara H."/>
            <person name="Hernandez J."/>
            <person name="Rabbinowitsch E."/>
            <person name="Steffen D."/>
            <person name="Sanders M."/>
            <person name="Ma J."/>
            <person name="Kohara Y."/>
            <person name="Sharp S."/>
            <person name="Simmonds M.N."/>
            <person name="Spiegler S."/>
            <person name="Tivey A."/>
            <person name="Sugano S."/>
            <person name="White B."/>
            <person name="Walker D."/>
            <person name="Woodward J.R."/>
            <person name="Winckler T."/>
            <person name="Tanaka Y."/>
            <person name="Shaulsky G."/>
            <person name="Schleicher M."/>
            <person name="Weinstock G.M."/>
            <person name="Rosenthal A."/>
            <person name="Cox E.C."/>
            <person name="Chisholm R.L."/>
            <person name="Gibbs R.A."/>
            <person name="Loomis W.F."/>
            <person name="Platzer M."/>
            <person name="Kay R.R."/>
            <person name="Williams J.G."/>
            <person name="Dear P.H."/>
            <person name="Noegel A.A."/>
            <person name="Barrell B.G."/>
            <person name="Kuspa A."/>
        </authorList>
    </citation>
    <scope>NUCLEOTIDE SEQUENCE [LARGE SCALE GENOMIC DNA]</scope>
    <source>
        <strain>AX4</strain>
    </source>
</reference>
<accession>Q54V76</accession>
<comment type="function">
    <text evidence="1">Component of the ubiquinol-cytochrome c oxidoreductase, a multisubunit transmembrane complex that is part of the mitochondrial electron transport chain which drives oxidative phosphorylation. The respiratory chain contains 3 multisubunit complexes succinate dehydrogenase (complex II, CII), ubiquinol-cytochrome c oxidoreductase (cytochrome b-c1 complex, complex III, CIII) and cytochrome c oxidase (complex IV, CIV), that cooperate to transfer electrons derived from NADH and succinate to molecular oxygen, creating an electrochemical gradient over the inner membrane that drives transmembrane transport and the ATP synthase. The cytochrome b-c1 complex catalyzes electron transfer from ubiquinol to cytochrome c, linking this redox reaction to translocation of protons across the mitochondrial inner membrane, with protons being carried across the membrane as hydrogens on the quinol. In the process called Q cycle, 2 protons are consumed from the matrix, 4 protons are released into the intermembrane space and 2 electrons are passed to cytochrome c.</text>
</comment>
<comment type="subunit">
    <text evidence="1">Component of the ubiquinol-cytochrome c oxidoreductase (cytochrome b-c1 complex, complex III, CIII), a multisubunit enzyme composed of 3 respiratory subunits cytochrome b, cytochrome c1 and Rieske protein, 2 core protein subunits, and additional low-molecular weight protein subunits. The complex exists as an obligatory dimer and forms supercomplexes (SCs) in the inner mitochondrial membrane with cytochrome c oxidase (complex IV, CIV).</text>
</comment>
<comment type="subcellular location">
    <subcellularLocation>
        <location evidence="1">Mitochondrion inner membrane</location>
        <topology evidence="1">Single-pass membrane protein</topology>
    </subcellularLocation>
</comment>
<comment type="similarity">
    <text evidence="3">Belongs to the UQCRQ/QCR8 family.</text>
</comment>
<gene>
    <name type="ORF">DDB_G0280569</name>
</gene>
<sequence length="73" mass="8687">MGQASKVFGKQITYSVSPFQQKLFVNYFKNAIPHLRRGVKDNFFCSVPYFAALYITVNWANETYHNEMKDHWY</sequence>
<feature type="chain" id="PRO_0000330352" description="Probable cytochrome b-c1 complex subunit 8">
    <location>
        <begin position="1"/>
        <end position="73"/>
    </location>
</feature>
<feature type="topological domain" description="Mitochondrial matrix" evidence="1">
    <location>
        <begin position="1"/>
        <end position="42"/>
    </location>
</feature>
<feature type="transmembrane region" description="Helical" evidence="2">
    <location>
        <begin position="43"/>
        <end position="60"/>
    </location>
</feature>
<feature type="topological domain" description="Mitochondrial intermembrane" evidence="1">
    <location>
        <begin position="61"/>
        <end position="73"/>
    </location>
</feature>
<protein>
    <recommendedName>
        <fullName>Probable cytochrome b-c1 complex subunit 8</fullName>
    </recommendedName>
    <alternativeName>
        <fullName>Ubiquinol-cytochrome c reductase complex subunit 8</fullName>
    </alternativeName>
</protein>
<keyword id="KW-0249">Electron transport</keyword>
<keyword id="KW-0472">Membrane</keyword>
<keyword id="KW-0496">Mitochondrion</keyword>
<keyword id="KW-0999">Mitochondrion inner membrane</keyword>
<keyword id="KW-1185">Reference proteome</keyword>
<keyword id="KW-0679">Respiratory chain</keyword>
<keyword id="KW-0812">Transmembrane</keyword>
<keyword id="KW-1133">Transmembrane helix</keyword>
<keyword id="KW-0813">Transport</keyword>
<name>QCR8_DICDI</name>
<organism>
    <name type="scientific">Dictyostelium discoideum</name>
    <name type="common">Social amoeba</name>
    <dbReference type="NCBI Taxonomy" id="44689"/>
    <lineage>
        <taxon>Eukaryota</taxon>
        <taxon>Amoebozoa</taxon>
        <taxon>Evosea</taxon>
        <taxon>Eumycetozoa</taxon>
        <taxon>Dictyostelia</taxon>
        <taxon>Dictyosteliales</taxon>
        <taxon>Dictyosteliaceae</taxon>
        <taxon>Dictyostelium</taxon>
    </lineage>
</organism>
<proteinExistence type="inferred from homology"/>